<sequence>MNYPAEPFRIKSVETVSMISRDERVKKMQEAGYNTFLLNSKDIYIDLLTDSGTNAMSDKQWAGMMIGDEAYAGSENFYHLEKTVKELFGFKHIVPTHQGRGAENLLSQLAIKPGQYVAGNMYFTTTRFHQEKNGATFVDIVRDEAHDASLNLPFKGDIDLNKLATLIKEKGAENIAYICLAVTVNLAGGQPVSMANMRAVHEMASTYGIKIFYDATRCVENAYFIKEQEAGYENVSIKDIVHEMFSYADGCTMSGKKDCLVNIGGFLCMNDEEMFSAAKELVVVYEGMPSYGGLAGRDMEAMAIGLREAMQYEYIEHRVKQVRYLGDKLREAGVPIVEPTGGHAVFLDARRFCPHLTQDQFPAQSLAASIYMETGVRSMERGIVSAGRSKETGENHRPKLETVRLTIPRRVYTYAHMDVVADGIIKLYQHKEDIRGLTFVYEPKQLRFFTARFDFI</sequence>
<organism>
    <name type="scientific">Enterobacter agglomerans</name>
    <name type="common">Erwinia herbicola</name>
    <name type="synonym">Pantoea agglomerans</name>
    <dbReference type="NCBI Taxonomy" id="549"/>
    <lineage>
        <taxon>Bacteria</taxon>
        <taxon>Pseudomonadati</taxon>
        <taxon>Pseudomonadota</taxon>
        <taxon>Gammaproteobacteria</taxon>
        <taxon>Enterobacterales</taxon>
        <taxon>Erwiniaceae</taxon>
        <taxon>Pantoea</taxon>
        <taxon>Pantoea agglomerans group</taxon>
    </lineage>
</organism>
<name>TPL_ENTAG</name>
<feature type="chain" id="PRO_0000195633" description="Tyrosine phenol-lyase">
    <location>
        <begin position="1"/>
        <end position="456"/>
    </location>
</feature>
<feature type="modified residue" description="N6-(pyridoxal phosphate)lysine" evidence="1">
    <location>
        <position position="257"/>
    </location>
</feature>
<feature type="sequence variant" description="In strain: MT-10509.">
    <original>D</original>
    <variation>N</variation>
    <location>
        <position position="157"/>
    </location>
</feature>
<feature type="sequence variant" description="In strain: MT-10509.">
    <original>F</original>
    <variation>Y</variation>
    <location>
        <position position="212"/>
    </location>
</feature>
<feature type="sequence variant" description="In strain: MT-10509.">
    <original>R</original>
    <variation>S</variation>
    <location>
        <position position="397"/>
    </location>
</feature>
<feature type="sequence variant" description="In strain: MT-10509.">
    <original>V</original>
    <variation>I</variation>
    <location>
        <position position="420"/>
    </location>
</feature>
<feature type="strand" evidence="3">
    <location>
        <begin position="7"/>
        <end position="15"/>
    </location>
</feature>
<feature type="helix" evidence="3">
    <location>
        <begin position="21"/>
        <end position="30"/>
    </location>
</feature>
<feature type="turn" evidence="3">
    <location>
        <begin position="31"/>
        <end position="33"/>
    </location>
</feature>
<feature type="helix" evidence="3">
    <location>
        <begin position="35"/>
        <end position="37"/>
    </location>
</feature>
<feature type="helix" evidence="3">
    <location>
        <begin position="40"/>
        <end position="42"/>
    </location>
</feature>
<feature type="strand" evidence="3">
    <location>
        <begin position="44"/>
        <end position="46"/>
    </location>
</feature>
<feature type="strand" evidence="3">
    <location>
        <begin position="50"/>
        <end position="52"/>
    </location>
</feature>
<feature type="helix" evidence="3">
    <location>
        <begin position="58"/>
        <end position="64"/>
    </location>
</feature>
<feature type="strand" evidence="3">
    <location>
        <begin position="71"/>
        <end position="73"/>
    </location>
</feature>
<feature type="helix" evidence="3">
    <location>
        <begin position="75"/>
        <end position="88"/>
    </location>
</feature>
<feature type="strand" evidence="3">
    <location>
        <begin position="91"/>
        <end position="98"/>
    </location>
</feature>
<feature type="helix" evidence="3">
    <location>
        <begin position="99"/>
        <end position="110"/>
    </location>
</feature>
<feature type="strand" evidence="3">
    <location>
        <begin position="116"/>
        <end position="121"/>
    </location>
</feature>
<feature type="helix" evidence="3">
    <location>
        <begin position="124"/>
        <end position="132"/>
    </location>
</feature>
<feature type="strand" evidence="3">
    <location>
        <begin position="136"/>
        <end position="139"/>
    </location>
</feature>
<feature type="helix" evidence="3">
    <location>
        <begin position="143"/>
        <end position="146"/>
    </location>
</feature>
<feature type="turn" evidence="3">
    <location>
        <begin position="153"/>
        <end position="156"/>
    </location>
</feature>
<feature type="helix" evidence="3">
    <location>
        <begin position="160"/>
        <end position="170"/>
    </location>
</feature>
<feature type="helix" evidence="3">
    <location>
        <begin position="172"/>
        <end position="174"/>
    </location>
</feature>
<feature type="strand" evidence="3">
    <location>
        <begin position="175"/>
        <end position="184"/>
    </location>
</feature>
<feature type="turn" evidence="3">
    <location>
        <begin position="185"/>
        <end position="188"/>
    </location>
</feature>
<feature type="helix" evidence="3">
    <location>
        <begin position="194"/>
        <end position="207"/>
    </location>
</feature>
<feature type="strand" evidence="3">
    <location>
        <begin position="211"/>
        <end position="214"/>
    </location>
</feature>
<feature type="helix" evidence="3">
    <location>
        <begin position="218"/>
        <end position="228"/>
    </location>
</feature>
<feature type="helix" evidence="3">
    <location>
        <begin position="237"/>
        <end position="246"/>
    </location>
</feature>
<feature type="strand" evidence="3">
    <location>
        <begin position="249"/>
        <end position="254"/>
    </location>
</feature>
<feature type="turn" evidence="3">
    <location>
        <begin position="255"/>
        <end position="259"/>
    </location>
</feature>
<feature type="strand" evidence="3">
    <location>
        <begin position="265"/>
        <end position="270"/>
    </location>
</feature>
<feature type="helix" evidence="3">
    <location>
        <begin position="272"/>
        <end position="285"/>
    </location>
</feature>
<feature type="turn" evidence="3">
    <location>
        <begin position="289"/>
        <end position="293"/>
    </location>
</feature>
<feature type="helix" evidence="3">
    <location>
        <begin position="296"/>
        <end position="309"/>
    </location>
</feature>
<feature type="helix" evidence="3">
    <location>
        <begin position="312"/>
        <end position="331"/>
    </location>
</feature>
<feature type="strand" evidence="3">
    <location>
        <begin position="342"/>
        <end position="348"/>
    </location>
</feature>
<feature type="helix" evidence="3">
    <location>
        <begin position="349"/>
        <end position="352"/>
    </location>
</feature>
<feature type="helix" evidence="3">
    <location>
        <begin position="358"/>
        <end position="360"/>
    </location>
</feature>
<feature type="helix" evidence="3">
    <location>
        <begin position="362"/>
        <end position="374"/>
    </location>
</feature>
<feature type="strand" evidence="3">
    <location>
        <begin position="375"/>
        <end position="377"/>
    </location>
</feature>
<feature type="strand" evidence="3">
    <location>
        <begin position="379"/>
        <end position="382"/>
    </location>
</feature>
<feature type="helix" evidence="3">
    <location>
        <begin position="383"/>
        <end position="386"/>
    </location>
</feature>
<feature type="turn" evidence="3">
    <location>
        <begin position="390"/>
        <end position="392"/>
    </location>
</feature>
<feature type="strand" evidence="3">
    <location>
        <begin position="402"/>
        <end position="406"/>
    </location>
</feature>
<feature type="helix" evidence="3">
    <location>
        <begin position="414"/>
        <end position="429"/>
    </location>
</feature>
<feature type="helix" evidence="3">
    <location>
        <begin position="430"/>
        <end position="433"/>
    </location>
</feature>
<feature type="strand" evidence="3">
    <location>
        <begin position="436"/>
        <end position="441"/>
    </location>
</feature>
<feature type="strand" evidence="3">
    <location>
        <begin position="444"/>
        <end position="446"/>
    </location>
</feature>
<feature type="helix" evidence="3">
    <location>
        <begin position="447"/>
        <end position="450"/>
    </location>
</feature>
<feature type="strand" evidence="3">
    <location>
        <begin position="452"/>
        <end position="456"/>
    </location>
</feature>
<protein>
    <recommendedName>
        <fullName>Tyrosine phenol-lyase</fullName>
        <ecNumber>4.1.99.2</ecNumber>
    </recommendedName>
    <alternativeName>
        <fullName>Beta-tyrosinase</fullName>
    </alternativeName>
</protein>
<gene>
    <name type="primary">tpl</name>
    <name type="synonym">tutA</name>
</gene>
<keyword id="KW-0002">3D-structure</keyword>
<keyword id="KW-0963">Cytoplasm</keyword>
<keyword id="KW-0903">Direct protein sequencing</keyword>
<keyword id="KW-0456">Lyase</keyword>
<keyword id="KW-0663">Pyridoxal phosphate</keyword>
<proteinExistence type="evidence at protein level"/>
<comment type="catalytic activity">
    <reaction>
        <text>L-tyrosine + H2O = phenol + pyruvate + NH4(+)</text>
        <dbReference type="Rhea" id="RHEA:21704"/>
        <dbReference type="ChEBI" id="CHEBI:15361"/>
        <dbReference type="ChEBI" id="CHEBI:15377"/>
        <dbReference type="ChEBI" id="CHEBI:15882"/>
        <dbReference type="ChEBI" id="CHEBI:28938"/>
        <dbReference type="ChEBI" id="CHEBI:58315"/>
        <dbReference type="EC" id="4.1.99.2"/>
    </reaction>
</comment>
<comment type="cofactor">
    <cofactor>
        <name>pyridoxal 5'-phosphate</name>
        <dbReference type="ChEBI" id="CHEBI:597326"/>
    </cofactor>
</comment>
<comment type="subunit">
    <text>Homotetramer.</text>
</comment>
<comment type="subcellular location">
    <subcellularLocation>
        <location evidence="2">Cytoplasm</location>
    </subcellularLocation>
</comment>
<comment type="induction">
    <text>By L-tyrosine.</text>
</comment>
<comment type="PTM">
    <text>Contains L-DOPA (3',4'-dihydroxyphenylalanine).</text>
</comment>
<comment type="similarity">
    <text evidence="2">Belongs to the beta-eliminating lyase family.</text>
</comment>
<accession>P31011</accession>
<dbReference type="EC" id="4.1.99.2"/>
<dbReference type="EMBL" id="S50513">
    <property type="protein sequence ID" value="AAB24234.1"/>
    <property type="molecule type" value="Genomic_DNA"/>
</dbReference>
<dbReference type="EMBL" id="D13714">
    <property type="protein sequence ID" value="BAA02867.1"/>
    <property type="molecule type" value="Genomic_DNA"/>
</dbReference>
<dbReference type="EMBL" id="U25347">
    <property type="protein sequence ID" value="AAA66390.1"/>
    <property type="molecule type" value="Genomic_DNA"/>
</dbReference>
<dbReference type="EMBL" id="L08484">
    <property type="protein sequence ID" value="AAA71928.1"/>
    <property type="molecule type" value="Genomic_DNA"/>
</dbReference>
<dbReference type="PDB" id="1C7G">
    <property type="method" value="X-ray"/>
    <property type="resolution" value="2.10 A"/>
    <property type="chains" value="A/B/C/D=1-456"/>
</dbReference>
<dbReference type="PDB" id="7FJK">
    <property type="method" value="X-ray"/>
    <property type="resolution" value="1.30 A"/>
    <property type="chains" value="A/B/C/D=1-456"/>
</dbReference>
<dbReference type="PDBsum" id="1C7G"/>
<dbReference type="PDBsum" id="7FJK"/>
<dbReference type="SMR" id="P31011"/>
<dbReference type="EvolutionaryTrace" id="P31011"/>
<dbReference type="GO" id="GO:0005737">
    <property type="term" value="C:cytoplasm"/>
    <property type="evidence" value="ECO:0007669"/>
    <property type="project" value="UniProtKB-SubCell"/>
</dbReference>
<dbReference type="GO" id="GO:0050371">
    <property type="term" value="F:tyrosine phenol-lyase activity"/>
    <property type="evidence" value="ECO:0007669"/>
    <property type="project" value="UniProtKB-UniRule"/>
</dbReference>
<dbReference type="GO" id="GO:0006570">
    <property type="term" value="P:tyrosine metabolic process"/>
    <property type="evidence" value="ECO:0007669"/>
    <property type="project" value="InterPro"/>
</dbReference>
<dbReference type="CDD" id="cd00617">
    <property type="entry name" value="Tnase_like"/>
    <property type="match status" value="1"/>
</dbReference>
<dbReference type="Gene3D" id="3.90.1150.10">
    <property type="entry name" value="Aspartate Aminotransferase, domain 1"/>
    <property type="match status" value="1"/>
</dbReference>
<dbReference type="Gene3D" id="3.40.640.10">
    <property type="entry name" value="Type I PLP-dependent aspartate aminotransferase-like (Major domain)"/>
    <property type="match status" value="1"/>
</dbReference>
<dbReference type="HAMAP" id="MF_00543">
    <property type="entry name" value="Tyr_phenol_lyase"/>
    <property type="match status" value="1"/>
</dbReference>
<dbReference type="InterPro" id="IPR001597">
    <property type="entry name" value="ArAA_b-elim_lyase/Thr_aldolase"/>
</dbReference>
<dbReference type="InterPro" id="IPR011166">
    <property type="entry name" value="Beta-eliminating_lyase"/>
</dbReference>
<dbReference type="InterPro" id="IPR015424">
    <property type="entry name" value="PyrdxlP-dep_Trfase"/>
</dbReference>
<dbReference type="InterPro" id="IPR015421">
    <property type="entry name" value="PyrdxlP-dep_Trfase_major"/>
</dbReference>
<dbReference type="InterPro" id="IPR015422">
    <property type="entry name" value="PyrdxlP-dep_Trfase_small"/>
</dbReference>
<dbReference type="InterPro" id="IPR018176">
    <property type="entry name" value="Tryptophanase_CS"/>
</dbReference>
<dbReference type="InterPro" id="IPR013441">
    <property type="entry name" value="Tyr_phenol_ly"/>
</dbReference>
<dbReference type="NCBIfam" id="NF009709">
    <property type="entry name" value="PRK13238.1"/>
    <property type="match status" value="1"/>
</dbReference>
<dbReference type="NCBIfam" id="TIGR02618">
    <property type="entry name" value="tyr_phenol_ly"/>
    <property type="match status" value="1"/>
</dbReference>
<dbReference type="PANTHER" id="PTHR32325">
    <property type="entry name" value="BETA-ELIMINATING LYASE-LIKE PROTEIN-RELATED"/>
    <property type="match status" value="1"/>
</dbReference>
<dbReference type="PANTHER" id="PTHR32325:SF4">
    <property type="entry name" value="TRYPTOPHANASE"/>
    <property type="match status" value="1"/>
</dbReference>
<dbReference type="Pfam" id="PF01212">
    <property type="entry name" value="Beta_elim_lyase"/>
    <property type="match status" value="1"/>
</dbReference>
<dbReference type="PIRSF" id="PIRSF001386">
    <property type="entry name" value="Trpase"/>
    <property type="match status" value="1"/>
</dbReference>
<dbReference type="SUPFAM" id="SSF53383">
    <property type="entry name" value="PLP-dependent transferases"/>
    <property type="match status" value="1"/>
</dbReference>
<dbReference type="PROSITE" id="PS00853">
    <property type="entry name" value="BETA_ELIM_LYASE"/>
    <property type="match status" value="1"/>
</dbReference>
<evidence type="ECO:0000250" key="1"/>
<evidence type="ECO:0000305" key="2"/>
<evidence type="ECO:0007829" key="3">
    <source>
        <dbReference type="PDB" id="7FJK"/>
    </source>
</evidence>
<reference key="1">
    <citation type="journal article" date="1992" name="Biotechnol. Appl. Biochem.">
        <title>Cloning and expression of the Erwinia herbicola tyrosine phenol-lyase gene in Escherichia coli.</title>
        <authorList>
            <person name="Iwamori S."/>
            <person name="Oikawa T."/>
            <person name="Ishiwata K."/>
            <person name="Makiguchi N."/>
        </authorList>
    </citation>
    <scope>NUCLEOTIDE SEQUENCE [GENOMIC DNA]</scope>
    <source>
        <strain>MT-10509</strain>
    </source>
</reference>
<reference key="2">
    <citation type="journal article" date="1993" name="J. Ferment. Bioeng.">
        <title>Cloning and nucleotide sequence of Erwinia herbicola AJ2982 tyrosine phenol-lyase gene.</title>
        <authorList>
            <person name="Suzuki H."/>
            <person name="Nishihara K."/>
            <person name="Usui N."/>
            <person name="Matsui H."/>
            <person name="Kumagai H."/>
        </authorList>
    </citation>
    <scope>NUCLEOTIDE SEQUENCE [GENOMIC DNA]</scope>
    <scope>PROTEIN SEQUENCE OF 1-11</scope>
    <source>
        <strain>AJ2982</strain>
    </source>
</reference>
<reference key="3">
    <citation type="submission" date="1995-04" db="EMBL/GenBank/DDBJ databases">
        <authorList>
            <person name="Foor F."/>
        </authorList>
    </citation>
    <scope>NUCLEOTIDE SEQUENCE [GENOMIC DNA]</scope>
    <source>
        <strain>ATCC 21434 / AJ 2985</strain>
    </source>
</reference>
<reference key="4">
    <citation type="journal article" date="1993" name="Appl. Environ. Microbiol.">
        <title>Production of L-dihydroxyphenylalanine in Escherichia coli with the tyrosine phenol-lyase gene cloned from Erwinia herbicola.</title>
        <authorList>
            <person name="Foor F."/>
            <person name="Morin N."/>
            <person name="Bostian K."/>
        </authorList>
    </citation>
    <scope>NUCLEOTIDE SEQUENCE [GENOMIC DNA] OF 1-51</scope>
</reference>